<organism>
    <name type="scientific">Bacillus cereus</name>
    <dbReference type="NCBI Taxonomy" id="1396"/>
    <lineage>
        <taxon>Bacteria</taxon>
        <taxon>Bacillati</taxon>
        <taxon>Bacillota</taxon>
        <taxon>Bacilli</taxon>
        <taxon>Bacillales</taxon>
        <taxon>Bacillaceae</taxon>
        <taxon>Bacillus</taxon>
        <taxon>Bacillus cereus group</taxon>
    </lineage>
</organism>
<sequence>MKKIPNKLLAVSAFLTITTTYAVIPIETFAIEIQQTNTENRSLSANEEQMKKALQDAGLFVKAMNEYSYLLIHNPDVSFEGITINGNTDLPSKIVQDQKNARAHAVTWNTHVKKQLLDTLTGIIEYDTKFENHYETLVEAINTGNGDTLKKGITDLQG</sequence>
<dbReference type="EMBL" id="L20441">
    <property type="protein sequence ID" value="AAA22523.1"/>
    <property type="molecule type" value="Genomic_DNA"/>
</dbReference>
<dbReference type="PIR" id="B49336">
    <property type="entry name" value="B49336"/>
</dbReference>
<dbReference type="SMR" id="Q45104"/>
<dbReference type="GO" id="GO:0005886">
    <property type="term" value="C:plasma membrane"/>
    <property type="evidence" value="ECO:0007669"/>
    <property type="project" value="UniProtKB-SubCell"/>
</dbReference>
<dbReference type="Gene3D" id="1.20.1170.10">
    <property type="match status" value="1"/>
</dbReference>
<dbReference type="InterPro" id="IPR052785">
    <property type="entry name" value="Enterotoxin_cmpnt"/>
</dbReference>
<dbReference type="InterPro" id="IPR008414">
    <property type="entry name" value="HBL"/>
</dbReference>
<dbReference type="PANTHER" id="PTHR38443">
    <property type="match status" value="1"/>
</dbReference>
<dbReference type="PANTHER" id="PTHR38443:SF2">
    <property type="entry name" value="NON-HEMOLYTIC ENTEROTOXIN LYTIC COMPONENT L1"/>
    <property type="match status" value="1"/>
</dbReference>
<dbReference type="Pfam" id="PF05791">
    <property type="entry name" value="Bacillus_HBL"/>
    <property type="match status" value="1"/>
</dbReference>
<dbReference type="SUPFAM" id="SSF58100">
    <property type="entry name" value="Bacterial hemolysins"/>
    <property type="match status" value="1"/>
</dbReference>
<protein>
    <recommendedName>
        <fullName>Uncharacterized protein in hblA 3'region</fullName>
    </recommendedName>
</protein>
<evidence type="ECO:0000255" key="1"/>
<evidence type="ECO:0000305" key="2"/>
<name>YHBA_BACCE</name>
<comment type="subcellular location">
    <subcellularLocation>
        <location evidence="2">Cell membrane</location>
    </subcellularLocation>
</comment>
<proteinExistence type="inferred from homology"/>
<reference key="1">
    <citation type="journal article" date="1993" name="J. Bacteriol.">
        <title>Molecular cloning and characterization of the hblA gene encoding the B component of hemolysin BL from Bacillus cereus.</title>
        <authorList>
            <person name="Heinrichs J.H."/>
            <person name="Beecher D.J."/>
            <person name="Macmillan J.D."/>
            <person name="Zilinskas B.A."/>
        </authorList>
    </citation>
    <scope>NUCLEOTIDE SEQUENCE [GENOMIC DNA]</scope>
</reference>
<keyword id="KW-1003">Cell membrane</keyword>
<keyword id="KW-0472">Membrane</keyword>
<keyword id="KW-0732">Signal</keyword>
<keyword id="KW-0812">Transmembrane</keyword>
<keyword id="KW-1133">Transmembrane helix</keyword>
<feature type="signal peptide" evidence="1">
    <location>
        <begin position="1"/>
        <end position="22"/>
    </location>
</feature>
<feature type="chain" id="PRO_0000022707" description="Uncharacterized protein in hblA 3'region">
    <location>
        <begin position="23"/>
        <end position="158" status="greater than"/>
    </location>
</feature>
<feature type="transmembrane region" description="Helical" evidence="1">
    <location>
        <begin position="120"/>
        <end position="140"/>
    </location>
</feature>
<feature type="non-terminal residue">
    <location>
        <position position="158"/>
    </location>
</feature>
<accession>Q45104</accession>